<evidence type="ECO:0000250" key="1"/>
<evidence type="ECO:0000305" key="2"/>
<comment type="function">
    <text evidence="1">SbcCD cleaves DNA hairpin structures. These structures can inhibit DNA replication and are intermediates in certain DNA recombination reactions. The complex acts as a 3'-&gt;5' double strand exonuclease that can open hairpins. It also has a 5' single-strand endonuclease activity (By similarity).</text>
</comment>
<comment type="subunit">
    <text evidence="1">Heterodimer of SbcC and SbcD.</text>
</comment>
<comment type="similarity">
    <text evidence="2">Belongs to the SbcD family.</text>
</comment>
<sequence length="373" mass="42968">MKIIHTADWHLGKILNGKQLLEDQAYILDMFVEKMKEEEPDIIVIAGDLYDTTYPSKDAIMLLEQAIGKLNLELRIPIIMISGNHDGKERLNYGASWFEHNQLFIRTDFTSINSPIEINGVNFYTLPYATVSEMKHYFEDDTIETHQQGITRCIETIAPEIDEDAVNILISHLTVQGGKTSDSERPLTIGTVESVQKGVFDIFDYVMLGHLHHPFSIEDDKIKYSGSLLQYSFSEAGQAKGYRRLTINDGIINDVFIPLKPLRQLEIISGEYNDVINEKVHVKNKDNYLHFKLKNMSHITDPMMSLKQIYPNTLALTNETFNYNEENNAIEISEKDDMSIIEMFYKHITDKELSDIQSKKIKNILENELRKED</sequence>
<feature type="chain" id="PRO_0000338484" description="Nuclease SbcCD subunit D">
    <location>
        <begin position="1"/>
        <end position="373"/>
    </location>
</feature>
<dbReference type="EMBL" id="AP009324">
    <property type="protein sequence ID" value="BAF78217.1"/>
    <property type="molecule type" value="Genomic_DNA"/>
</dbReference>
<dbReference type="RefSeq" id="WP_000691301.1">
    <property type="nucleotide sequence ID" value="NC_009782.1"/>
</dbReference>
<dbReference type="SMR" id="A7X202"/>
<dbReference type="KEGG" id="saw:SAHV_1334"/>
<dbReference type="HOGENOM" id="CLU_038045_0_1_9"/>
<dbReference type="GO" id="GO:0008408">
    <property type="term" value="F:3'-5' exonuclease activity"/>
    <property type="evidence" value="ECO:0007669"/>
    <property type="project" value="InterPro"/>
</dbReference>
<dbReference type="GO" id="GO:0004519">
    <property type="term" value="F:endonuclease activity"/>
    <property type="evidence" value="ECO:0007669"/>
    <property type="project" value="UniProtKB-KW"/>
</dbReference>
<dbReference type="GO" id="GO:0006310">
    <property type="term" value="P:DNA recombination"/>
    <property type="evidence" value="ECO:0007669"/>
    <property type="project" value="UniProtKB-KW"/>
</dbReference>
<dbReference type="GO" id="GO:0006260">
    <property type="term" value="P:DNA replication"/>
    <property type="evidence" value="ECO:0007669"/>
    <property type="project" value="UniProtKB-KW"/>
</dbReference>
<dbReference type="CDD" id="cd00840">
    <property type="entry name" value="MPP_Mre11_N"/>
    <property type="match status" value="1"/>
</dbReference>
<dbReference type="Gene3D" id="3.60.21.10">
    <property type="match status" value="1"/>
</dbReference>
<dbReference type="InterPro" id="IPR004843">
    <property type="entry name" value="Calcineurin-like_PHP_ApaH"/>
</dbReference>
<dbReference type="InterPro" id="IPR050535">
    <property type="entry name" value="DNA_Repair-Maintenance_Comp"/>
</dbReference>
<dbReference type="InterPro" id="IPR029052">
    <property type="entry name" value="Metallo-depent_PP-like"/>
</dbReference>
<dbReference type="InterPro" id="IPR041796">
    <property type="entry name" value="Mre11_N"/>
</dbReference>
<dbReference type="InterPro" id="IPR053381">
    <property type="entry name" value="SbcCD_nuclease"/>
</dbReference>
<dbReference type="InterPro" id="IPR004593">
    <property type="entry name" value="SbcD"/>
</dbReference>
<dbReference type="InterPro" id="IPR026843">
    <property type="entry name" value="SbcD_C"/>
</dbReference>
<dbReference type="NCBIfam" id="TIGR00619">
    <property type="entry name" value="sbcd"/>
    <property type="match status" value="1"/>
</dbReference>
<dbReference type="NCBIfam" id="NF041753">
    <property type="entry name" value="sbcd_Staph"/>
    <property type="match status" value="1"/>
</dbReference>
<dbReference type="PANTHER" id="PTHR30337">
    <property type="entry name" value="COMPONENT OF ATP-DEPENDENT DSDNA EXONUCLEASE"/>
    <property type="match status" value="1"/>
</dbReference>
<dbReference type="PANTHER" id="PTHR30337:SF0">
    <property type="entry name" value="NUCLEASE SBCCD SUBUNIT D"/>
    <property type="match status" value="1"/>
</dbReference>
<dbReference type="Pfam" id="PF00149">
    <property type="entry name" value="Metallophos"/>
    <property type="match status" value="1"/>
</dbReference>
<dbReference type="Pfam" id="PF12320">
    <property type="entry name" value="SbcD_C"/>
    <property type="match status" value="1"/>
</dbReference>
<dbReference type="SUPFAM" id="SSF56300">
    <property type="entry name" value="Metallo-dependent phosphatases"/>
    <property type="match status" value="1"/>
</dbReference>
<gene>
    <name type="primary">sbcD</name>
    <name type="ordered locus">SAHV_1334</name>
</gene>
<reference key="1">
    <citation type="journal article" date="2008" name="Antimicrob. Agents Chemother.">
        <title>Mutated response regulator graR is responsible for phenotypic conversion of Staphylococcus aureus from heterogeneous vancomycin-intermediate resistance to vancomycin-intermediate resistance.</title>
        <authorList>
            <person name="Neoh H.-M."/>
            <person name="Cui L."/>
            <person name="Yuzawa H."/>
            <person name="Takeuchi F."/>
            <person name="Matsuo M."/>
            <person name="Hiramatsu K."/>
        </authorList>
    </citation>
    <scope>NUCLEOTIDE SEQUENCE [LARGE SCALE GENOMIC DNA]</scope>
    <source>
        <strain>Mu3 / ATCC 700698</strain>
    </source>
</reference>
<organism>
    <name type="scientific">Staphylococcus aureus (strain Mu3 / ATCC 700698)</name>
    <dbReference type="NCBI Taxonomy" id="418127"/>
    <lineage>
        <taxon>Bacteria</taxon>
        <taxon>Bacillati</taxon>
        <taxon>Bacillota</taxon>
        <taxon>Bacilli</taxon>
        <taxon>Bacillales</taxon>
        <taxon>Staphylococcaceae</taxon>
        <taxon>Staphylococcus</taxon>
    </lineage>
</organism>
<protein>
    <recommendedName>
        <fullName>Nuclease SbcCD subunit D</fullName>
    </recommendedName>
</protein>
<name>SBCD_STAA1</name>
<keyword id="KW-0233">DNA recombination</keyword>
<keyword id="KW-0235">DNA replication</keyword>
<keyword id="KW-0255">Endonuclease</keyword>
<keyword id="KW-0269">Exonuclease</keyword>
<keyword id="KW-0378">Hydrolase</keyword>
<keyword id="KW-0540">Nuclease</keyword>
<accession>A7X202</accession>
<proteinExistence type="inferred from homology"/>